<reference key="1">
    <citation type="journal article" date="2005" name="Genome Res.">
        <title>The Chlamydophila abortus genome sequence reveals an array of variable proteins that contribute to interspecies variation.</title>
        <authorList>
            <person name="Thomson N.R."/>
            <person name="Yeats C."/>
            <person name="Bell K."/>
            <person name="Holden M.T.G."/>
            <person name="Bentley S.D."/>
            <person name="Livingstone M."/>
            <person name="Cerdeno-Tarraga A.-M."/>
            <person name="Harris B."/>
            <person name="Doggett J."/>
            <person name="Ormond D."/>
            <person name="Mungall K."/>
            <person name="Clarke K."/>
            <person name="Feltwell T."/>
            <person name="Hance Z."/>
            <person name="Sanders M."/>
            <person name="Quail M.A."/>
            <person name="Price C."/>
            <person name="Barrell B.G."/>
            <person name="Parkhill J."/>
            <person name="Longbottom D."/>
        </authorList>
    </citation>
    <scope>NUCLEOTIDE SEQUENCE [LARGE SCALE GENOMIC DNA]</scope>
    <source>
        <strain>DSM 27085 / S26/3</strain>
    </source>
</reference>
<dbReference type="EMBL" id="CR848038">
    <property type="protein sequence ID" value="CAH64112.1"/>
    <property type="molecule type" value="Genomic_DNA"/>
</dbReference>
<dbReference type="RefSeq" id="WP_006343361.1">
    <property type="nucleotide sequence ID" value="NC_004552.2"/>
</dbReference>
<dbReference type="SMR" id="Q5L5H9"/>
<dbReference type="GeneID" id="93024215"/>
<dbReference type="KEGG" id="cab:CAB665"/>
<dbReference type="eggNOG" id="COG0080">
    <property type="taxonomic scope" value="Bacteria"/>
</dbReference>
<dbReference type="HOGENOM" id="CLU_074237_2_0_0"/>
<dbReference type="OrthoDB" id="9802408at2"/>
<dbReference type="Proteomes" id="UP000001012">
    <property type="component" value="Chromosome"/>
</dbReference>
<dbReference type="GO" id="GO:0022625">
    <property type="term" value="C:cytosolic large ribosomal subunit"/>
    <property type="evidence" value="ECO:0007669"/>
    <property type="project" value="TreeGrafter"/>
</dbReference>
<dbReference type="GO" id="GO:0070180">
    <property type="term" value="F:large ribosomal subunit rRNA binding"/>
    <property type="evidence" value="ECO:0007669"/>
    <property type="project" value="UniProtKB-UniRule"/>
</dbReference>
<dbReference type="GO" id="GO:0003735">
    <property type="term" value="F:structural constituent of ribosome"/>
    <property type="evidence" value="ECO:0007669"/>
    <property type="project" value="InterPro"/>
</dbReference>
<dbReference type="GO" id="GO:0006412">
    <property type="term" value="P:translation"/>
    <property type="evidence" value="ECO:0007669"/>
    <property type="project" value="UniProtKB-UniRule"/>
</dbReference>
<dbReference type="CDD" id="cd00349">
    <property type="entry name" value="Ribosomal_L11"/>
    <property type="match status" value="1"/>
</dbReference>
<dbReference type="FunFam" id="1.10.10.250:FF:000001">
    <property type="entry name" value="50S ribosomal protein L11"/>
    <property type="match status" value="1"/>
</dbReference>
<dbReference type="FunFam" id="3.30.1550.10:FF:000001">
    <property type="entry name" value="50S ribosomal protein L11"/>
    <property type="match status" value="1"/>
</dbReference>
<dbReference type="Gene3D" id="1.10.10.250">
    <property type="entry name" value="Ribosomal protein L11, C-terminal domain"/>
    <property type="match status" value="1"/>
</dbReference>
<dbReference type="Gene3D" id="3.30.1550.10">
    <property type="entry name" value="Ribosomal protein L11/L12, N-terminal domain"/>
    <property type="match status" value="1"/>
</dbReference>
<dbReference type="HAMAP" id="MF_00736">
    <property type="entry name" value="Ribosomal_uL11"/>
    <property type="match status" value="1"/>
</dbReference>
<dbReference type="InterPro" id="IPR000911">
    <property type="entry name" value="Ribosomal_uL11"/>
</dbReference>
<dbReference type="InterPro" id="IPR006519">
    <property type="entry name" value="Ribosomal_uL11_bac-typ"/>
</dbReference>
<dbReference type="InterPro" id="IPR020783">
    <property type="entry name" value="Ribosomal_uL11_C"/>
</dbReference>
<dbReference type="InterPro" id="IPR036769">
    <property type="entry name" value="Ribosomal_uL11_C_sf"/>
</dbReference>
<dbReference type="InterPro" id="IPR020785">
    <property type="entry name" value="Ribosomal_uL11_CS"/>
</dbReference>
<dbReference type="InterPro" id="IPR020784">
    <property type="entry name" value="Ribosomal_uL11_N"/>
</dbReference>
<dbReference type="InterPro" id="IPR036796">
    <property type="entry name" value="Ribosomal_uL11_N_sf"/>
</dbReference>
<dbReference type="NCBIfam" id="TIGR01632">
    <property type="entry name" value="L11_bact"/>
    <property type="match status" value="1"/>
</dbReference>
<dbReference type="PANTHER" id="PTHR11661">
    <property type="entry name" value="60S RIBOSOMAL PROTEIN L12"/>
    <property type="match status" value="1"/>
</dbReference>
<dbReference type="PANTHER" id="PTHR11661:SF1">
    <property type="entry name" value="LARGE RIBOSOMAL SUBUNIT PROTEIN UL11M"/>
    <property type="match status" value="1"/>
</dbReference>
<dbReference type="Pfam" id="PF00298">
    <property type="entry name" value="Ribosomal_L11"/>
    <property type="match status" value="1"/>
</dbReference>
<dbReference type="Pfam" id="PF03946">
    <property type="entry name" value="Ribosomal_L11_N"/>
    <property type="match status" value="1"/>
</dbReference>
<dbReference type="SMART" id="SM00649">
    <property type="entry name" value="RL11"/>
    <property type="match status" value="1"/>
</dbReference>
<dbReference type="SUPFAM" id="SSF54747">
    <property type="entry name" value="Ribosomal L11/L12e N-terminal domain"/>
    <property type="match status" value="1"/>
</dbReference>
<dbReference type="SUPFAM" id="SSF46906">
    <property type="entry name" value="Ribosomal protein L11, C-terminal domain"/>
    <property type="match status" value="1"/>
</dbReference>
<dbReference type="PROSITE" id="PS00359">
    <property type="entry name" value="RIBOSOMAL_L11"/>
    <property type="match status" value="1"/>
</dbReference>
<accession>Q5L5H9</accession>
<comment type="function">
    <text evidence="1">Forms part of the ribosomal stalk which helps the ribosome interact with GTP-bound translation factors.</text>
</comment>
<comment type="subunit">
    <text evidence="1">Part of the ribosomal stalk of the 50S ribosomal subunit. Interacts with L10 and the large rRNA to form the base of the stalk. L10 forms an elongated spine to which L12 dimers bind in a sequential fashion forming a multimeric L10(L12)X complex.</text>
</comment>
<comment type="PTM">
    <text evidence="1">One or more lysine residues are methylated.</text>
</comment>
<comment type="similarity">
    <text evidence="1">Belongs to the universal ribosomal protein uL11 family.</text>
</comment>
<name>RL11_CHLAB</name>
<organism>
    <name type="scientific">Chlamydia abortus (strain DSM 27085 / S26/3)</name>
    <name type="common">Chlamydophila abortus</name>
    <dbReference type="NCBI Taxonomy" id="218497"/>
    <lineage>
        <taxon>Bacteria</taxon>
        <taxon>Pseudomonadati</taxon>
        <taxon>Chlamydiota</taxon>
        <taxon>Chlamydiia</taxon>
        <taxon>Chlamydiales</taxon>
        <taxon>Chlamydiaceae</taxon>
        <taxon>Chlamydia/Chlamydophila group</taxon>
        <taxon>Chlamydia</taxon>
    </lineage>
</organism>
<feature type="chain" id="PRO_0000258136" description="Large ribosomal subunit protein uL11">
    <location>
        <begin position="1"/>
        <end position="141"/>
    </location>
</feature>
<gene>
    <name evidence="1" type="primary">rplK</name>
    <name type="ordered locus">CAB665</name>
</gene>
<evidence type="ECO:0000255" key="1">
    <source>
        <dbReference type="HAMAP-Rule" id="MF_00736"/>
    </source>
</evidence>
<evidence type="ECO:0000305" key="2"/>
<keyword id="KW-0488">Methylation</keyword>
<keyword id="KW-0687">Ribonucleoprotein</keyword>
<keyword id="KW-0689">Ribosomal protein</keyword>
<keyword id="KW-0694">RNA-binding</keyword>
<keyword id="KW-0699">rRNA-binding</keyword>
<proteinExistence type="inferred from homology"/>
<sequence>MSNKKVIKLIKLQIPGGKANPAPPIGPALGAAGVNIMGFCKEFNAATQDRPGDLLPVVITVYSDKTFTFITKQPPVSSLIKKALNLESGSKIPNRNKVGKLTQAQVTAIAEQKMKDMDVVLLESAKRMVEGTARSMGIDVE</sequence>
<protein>
    <recommendedName>
        <fullName evidence="1">Large ribosomal subunit protein uL11</fullName>
    </recommendedName>
    <alternativeName>
        <fullName evidence="2">50S ribosomal protein L11</fullName>
    </alternativeName>
</protein>